<keyword id="KW-0175">Coiled coil</keyword>
<keyword id="KW-1185">Reference proteome</keyword>
<reference key="1">
    <citation type="journal article" date="2006" name="Nature">
        <title>Analysis of the DNA sequence and duplication history of human chromosome 15.</title>
        <authorList>
            <person name="Zody M.C."/>
            <person name="Garber M."/>
            <person name="Sharpe T."/>
            <person name="Young S.K."/>
            <person name="Rowen L."/>
            <person name="O'Neill K."/>
            <person name="Whittaker C.A."/>
            <person name="Kamal M."/>
            <person name="Chang J.L."/>
            <person name="Cuomo C.A."/>
            <person name="Dewar K."/>
            <person name="FitzGerald M.G."/>
            <person name="Kodira C.D."/>
            <person name="Madan A."/>
            <person name="Qin S."/>
            <person name="Yang X."/>
            <person name="Abbasi N."/>
            <person name="Abouelleil A."/>
            <person name="Arachchi H.M."/>
            <person name="Baradarani L."/>
            <person name="Birditt B."/>
            <person name="Bloom S."/>
            <person name="Bloom T."/>
            <person name="Borowsky M.L."/>
            <person name="Burke J."/>
            <person name="Butler J."/>
            <person name="Cook A."/>
            <person name="DeArellano K."/>
            <person name="DeCaprio D."/>
            <person name="Dorris L. III"/>
            <person name="Dors M."/>
            <person name="Eichler E.E."/>
            <person name="Engels R."/>
            <person name="Fahey J."/>
            <person name="Fleetwood P."/>
            <person name="Friedman C."/>
            <person name="Gearin G."/>
            <person name="Hall J.L."/>
            <person name="Hensley G."/>
            <person name="Johnson E."/>
            <person name="Jones C."/>
            <person name="Kamat A."/>
            <person name="Kaur A."/>
            <person name="Locke D.P."/>
            <person name="Madan A."/>
            <person name="Munson G."/>
            <person name="Jaffe D.B."/>
            <person name="Lui A."/>
            <person name="Macdonald P."/>
            <person name="Mauceli E."/>
            <person name="Naylor J.W."/>
            <person name="Nesbitt R."/>
            <person name="Nicol R."/>
            <person name="O'Leary S.B."/>
            <person name="Ratcliffe A."/>
            <person name="Rounsley S."/>
            <person name="She X."/>
            <person name="Sneddon K.M.B."/>
            <person name="Stewart S."/>
            <person name="Sougnez C."/>
            <person name="Stone S.M."/>
            <person name="Topham K."/>
            <person name="Vincent D."/>
            <person name="Wang S."/>
            <person name="Zimmer A.R."/>
            <person name="Birren B.W."/>
            <person name="Hood L."/>
            <person name="Lander E.S."/>
            <person name="Nusbaum C."/>
        </authorList>
    </citation>
    <scope>NUCLEOTIDE SEQUENCE [LARGE SCALE GENOMIC DNA]</scope>
</reference>
<dbReference type="EMBL" id="AC120045">
    <property type="status" value="NOT_ANNOTATED_CDS"/>
    <property type="molecule type" value="Genomic_DNA"/>
</dbReference>
<dbReference type="CCDS" id="CCDS61574.1"/>
<dbReference type="RefSeq" id="NP_001269401.1">
    <property type="nucleotide sequence ID" value="NM_001282472.2"/>
</dbReference>
<dbReference type="SMR" id="A6NMD2"/>
<dbReference type="BioGRID" id="575504">
    <property type="interactions" value="3"/>
</dbReference>
<dbReference type="FunCoup" id="A6NMD2">
    <property type="interactions" value="14"/>
</dbReference>
<dbReference type="IntAct" id="A6NMD2">
    <property type="interactions" value="1"/>
</dbReference>
<dbReference type="STRING" id="9606.ENSP00000456401"/>
<dbReference type="GlyGen" id="A6NMD2">
    <property type="glycosylation" value="2 sites, 1 N-linked glycan (1 site)"/>
</dbReference>
<dbReference type="iPTMnet" id="A6NMD2"/>
<dbReference type="PhosphoSitePlus" id="A6NMD2"/>
<dbReference type="BioMuta" id="GOLGA8J"/>
<dbReference type="jPOST" id="A6NMD2"/>
<dbReference type="MassIVE" id="A6NMD2"/>
<dbReference type="PaxDb" id="9606-ENSP00000456401"/>
<dbReference type="PeptideAtlas" id="A6NMD2"/>
<dbReference type="ProteomicsDB" id="1533"/>
<dbReference type="ProteomicsDB" id="42164"/>
<dbReference type="Antibodypedia" id="69034">
    <property type="antibodies" value="50 antibodies from 8 providers"/>
</dbReference>
<dbReference type="DNASU" id="653073"/>
<dbReference type="Ensembl" id="ENST00000567927.2">
    <property type="protein sequence ID" value="ENSP00000456401.1"/>
    <property type="gene ID" value="ENSG00000179938.13"/>
</dbReference>
<dbReference type="Ensembl" id="ENST00000611771.1">
    <property type="protein sequence ID" value="ENSP00000480494.1"/>
    <property type="gene ID" value="ENSG00000278119.1"/>
</dbReference>
<dbReference type="GeneID" id="653073"/>
<dbReference type="KEGG" id="hsa:653073"/>
<dbReference type="MANE-Select" id="ENST00000567927.2">
    <property type="protein sequence ID" value="ENSP00000456401.1"/>
    <property type="RefSeq nucleotide sequence ID" value="NM_001282472.2"/>
    <property type="RefSeq protein sequence ID" value="NP_001269401.1"/>
</dbReference>
<dbReference type="UCSC" id="uc021sgy.3">
    <property type="organism name" value="human"/>
</dbReference>
<dbReference type="AGR" id="HGNC:38650"/>
<dbReference type="CTD" id="653073"/>
<dbReference type="GeneCards" id="GOLGA8J"/>
<dbReference type="HGNC" id="HGNC:38650">
    <property type="gene designation" value="GOLGA8J"/>
</dbReference>
<dbReference type="HPA" id="ENSG00000179938">
    <property type="expression patterns" value="Tissue enriched (testis)"/>
</dbReference>
<dbReference type="neXtProt" id="NX_A6NMD2"/>
<dbReference type="PharmGKB" id="PA165478975"/>
<dbReference type="VEuPathDB" id="HostDB:ENSG00000179938"/>
<dbReference type="eggNOG" id="KOG4725">
    <property type="taxonomic scope" value="Eukaryota"/>
</dbReference>
<dbReference type="GeneTree" id="ENSGT00530000062932"/>
<dbReference type="HOGENOM" id="CLU_012403_1_2_1"/>
<dbReference type="InParanoid" id="A6NMD2"/>
<dbReference type="OrthoDB" id="9837597at2759"/>
<dbReference type="PAN-GO" id="A6NMD2">
    <property type="GO annotations" value="4 GO annotations based on evolutionary models"/>
</dbReference>
<dbReference type="PhylomeDB" id="A6NMD2"/>
<dbReference type="TreeFam" id="TF316990"/>
<dbReference type="PathwayCommons" id="A6NMD2"/>
<dbReference type="BioGRID-ORCS" id="653073">
    <property type="hits" value="27 hits in 221 CRISPR screens"/>
</dbReference>
<dbReference type="GenomeRNAi" id="653073"/>
<dbReference type="Pharos" id="A6NMD2">
    <property type="development level" value="Tdark"/>
</dbReference>
<dbReference type="PRO" id="PR:A6NMD2"/>
<dbReference type="Proteomes" id="UP000005640">
    <property type="component" value="Chromosome 15"/>
</dbReference>
<dbReference type="RNAct" id="A6NMD2">
    <property type="molecule type" value="protein"/>
</dbReference>
<dbReference type="Bgee" id="ENSG00000179938">
    <property type="expression patterns" value="Expressed in left testis and 96 other cell types or tissues"/>
</dbReference>
<dbReference type="GO" id="GO:0005801">
    <property type="term" value="C:cis-Golgi network"/>
    <property type="evidence" value="ECO:0000318"/>
    <property type="project" value="GO_Central"/>
</dbReference>
<dbReference type="GO" id="GO:0000137">
    <property type="term" value="C:Golgi cis cisterna"/>
    <property type="evidence" value="ECO:0000318"/>
    <property type="project" value="GO_Central"/>
</dbReference>
<dbReference type="GO" id="GO:0032580">
    <property type="term" value="C:Golgi cisterna membrane"/>
    <property type="evidence" value="ECO:0000318"/>
    <property type="project" value="GO_Central"/>
</dbReference>
<dbReference type="GO" id="GO:0007030">
    <property type="term" value="P:Golgi organization"/>
    <property type="evidence" value="ECO:0000318"/>
    <property type="project" value="GO_Central"/>
</dbReference>
<dbReference type="InterPro" id="IPR043937">
    <property type="entry name" value="GM130_C"/>
</dbReference>
<dbReference type="InterPro" id="IPR043976">
    <property type="entry name" value="GOLGA_cons_dom"/>
</dbReference>
<dbReference type="InterPro" id="IPR024858">
    <property type="entry name" value="Golgin_A"/>
</dbReference>
<dbReference type="PANTHER" id="PTHR10881:SF62">
    <property type="entry name" value="GOLGIN SUBFAMILY A MEMBER 8H-RELATED"/>
    <property type="match status" value="1"/>
</dbReference>
<dbReference type="PANTHER" id="PTHR10881">
    <property type="entry name" value="GOLGIN SUBFAMILY A MEMBER-RELATED"/>
    <property type="match status" value="1"/>
</dbReference>
<dbReference type="Pfam" id="PF19046">
    <property type="entry name" value="GM130_C"/>
    <property type="match status" value="1"/>
</dbReference>
<dbReference type="Pfam" id="PF15070">
    <property type="entry name" value="GOLGA2L5"/>
    <property type="match status" value="2"/>
</dbReference>
<accession>A6NMD2</accession>
<accession>H3BRU0</accession>
<protein>
    <recommendedName>
        <fullName>Golgin subfamily A member 8J</fullName>
    </recommendedName>
</protein>
<evidence type="ECO:0000255" key="1"/>
<evidence type="ECO:0000256" key="2">
    <source>
        <dbReference type="SAM" id="MobiDB-lite"/>
    </source>
</evidence>
<evidence type="ECO:0000305" key="3"/>
<name>GOG8J_HUMAN</name>
<sequence length="632" mass="71775">MAEETQHNKLAAAKKKLKEYWQKNSPRVPAGANRNRKTNGSIPEKATSGGCQPPRDSATGFHREGPTSSATLKDLESPCQERAVVLDSRSVEISQLKNTIKSLKQQKKQVEHQLEEEKKANNKKQKAKRVLEVQIQTLNIQKEELNTDLYHMKRSLRYFEEKSKDLAVRLQHSLQRKGELESVLSNVMATQKKKANQLSSRSKARTEWKLEQSMREEALLKVQLTQFKESFQQVQLERDEYSEHLKGERARWQQRMRKMSQEICTLKKEKQQDMRRVEKLERSLSKLKNQMAEPLPPEPPAVPSEVELQHLRKELERVAGELQAQVKNNQRISLLNQRQEERIREQEERLRKQEERIQEQHKSLQQLAKPQSVFKEPNNENKNALQLEQQVKELQEKLGEEHLEAASQQNQQLTAQLSLMALPGEGHGGEHLDSEGEEAPRPMPSVPEDPESREAMSSFMDHLEEKADLSELVKKKELCFIHHWRERCHQKTHHLLSEPGGRAKDAALGGGHHQAGAQGGDEGEAAGAAADGIAAYSNYNNGHRKFLAAAHNSADEPGPGAPAPQELGAADKHGHLCEVSLTSSAQGEAREDPLLDKPTAQPIVQDHQEHPGLGSNCCVPFLCWAWLPRRRR</sequence>
<gene>
    <name type="primary">GOLGA8J</name>
</gene>
<feature type="chain" id="PRO_0000332313" description="Golgin subfamily A member 8J">
    <location>
        <begin position="1"/>
        <end position="632"/>
    </location>
</feature>
<feature type="region of interest" description="Disordered" evidence="2">
    <location>
        <begin position="1"/>
        <end position="76"/>
    </location>
</feature>
<feature type="region of interest" description="Disordered" evidence="2">
    <location>
        <begin position="352"/>
        <end position="377"/>
    </location>
</feature>
<feature type="region of interest" description="Disordered" evidence="2">
    <location>
        <begin position="423"/>
        <end position="452"/>
    </location>
</feature>
<feature type="region of interest" description="Disordered" evidence="2">
    <location>
        <begin position="496"/>
        <end position="524"/>
    </location>
</feature>
<feature type="coiled-coil region" evidence="1">
    <location>
        <begin position="86"/>
        <end position="154"/>
    </location>
</feature>
<feature type="coiled-coil region" evidence="1">
    <location>
        <begin position="220"/>
        <end position="421"/>
    </location>
</feature>
<feature type="compositionally biased region" description="Basic and acidic residues" evidence="2">
    <location>
        <begin position="352"/>
        <end position="362"/>
    </location>
</feature>
<feature type="compositionally biased region" description="Basic and acidic residues" evidence="2">
    <location>
        <begin position="427"/>
        <end position="440"/>
    </location>
</feature>
<feature type="compositionally biased region" description="Gly residues" evidence="2">
    <location>
        <begin position="508"/>
        <end position="520"/>
    </location>
</feature>
<organism>
    <name type="scientific">Homo sapiens</name>
    <name type="common">Human</name>
    <dbReference type="NCBI Taxonomy" id="9606"/>
    <lineage>
        <taxon>Eukaryota</taxon>
        <taxon>Metazoa</taxon>
        <taxon>Chordata</taxon>
        <taxon>Craniata</taxon>
        <taxon>Vertebrata</taxon>
        <taxon>Euteleostomi</taxon>
        <taxon>Mammalia</taxon>
        <taxon>Eutheria</taxon>
        <taxon>Euarchontoglires</taxon>
        <taxon>Primates</taxon>
        <taxon>Haplorrhini</taxon>
        <taxon>Catarrhini</taxon>
        <taxon>Hominidae</taxon>
        <taxon>Homo</taxon>
    </lineage>
</organism>
<comment type="similarity">
    <text evidence="3">Belongs to the GOLGA8 family.</text>
</comment>
<proteinExistence type="inferred from homology"/>